<feature type="initiator methionine" description="Removed" evidence="1">
    <location>
        <position position="1"/>
    </location>
</feature>
<feature type="chain" id="PRO_0000152764" description="Lysine--tRNA ligase">
    <location>
        <begin position="2"/>
        <end position="597"/>
    </location>
</feature>
<feature type="binding site" evidence="1">
    <location>
        <position position="277"/>
    </location>
    <ligand>
        <name>substrate</name>
    </ligand>
</feature>
<feature type="binding site" evidence="1">
    <location>
        <position position="301"/>
    </location>
    <ligand>
        <name>substrate</name>
    </ligand>
</feature>
<feature type="binding site" evidence="1">
    <location>
        <begin position="323"/>
        <end position="325"/>
    </location>
    <ligand>
        <name>ATP</name>
        <dbReference type="ChEBI" id="CHEBI:30616"/>
    </ligand>
</feature>
<feature type="binding site" evidence="1">
    <location>
        <begin position="331"/>
        <end position="332"/>
    </location>
    <ligand>
        <name>ATP</name>
        <dbReference type="ChEBI" id="CHEBI:30616"/>
    </ligand>
</feature>
<feature type="binding site" evidence="1">
    <location>
        <position position="339"/>
    </location>
    <ligand>
        <name>substrate</name>
    </ligand>
</feature>
<feature type="binding site" evidence="1">
    <location>
        <position position="341"/>
    </location>
    <ligand>
        <name>substrate</name>
    </ligand>
</feature>
<feature type="binding site" evidence="1">
    <location>
        <begin position="494"/>
        <end position="495"/>
    </location>
    <ligand>
        <name>ATP</name>
        <dbReference type="ChEBI" id="CHEBI:30616"/>
    </ligand>
</feature>
<feature type="binding site" evidence="1">
    <location>
        <position position="497"/>
    </location>
    <ligand>
        <name>substrate</name>
    </ligand>
</feature>
<feature type="binding site" evidence="1">
    <location>
        <position position="501"/>
    </location>
    <ligand>
        <name>substrate</name>
    </ligand>
</feature>
<feature type="binding site" evidence="1">
    <location>
        <begin position="550"/>
        <end position="553"/>
    </location>
    <ligand>
        <name>ATP</name>
        <dbReference type="ChEBI" id="CHEBI:30616"/>
    </ligand>
</feature>
<feature type="modified residue" description="N-acetylalanine" evidence="1">
    <location>
        <position position="2"/>
    </location>
</feature>
<feature type="modified residue" description="N6-acetyllysine" evidence="1">
    <location>
        <position position="88"/>
    </location>
</feature>
<feature type="modified residue" description="N6-acetyllysine" evidence="1">
    <location>
        <position position="141"/>
    </location>
</feature>
<feature type="modified residue" description="Phosphoserine" evidence="1">
    <location>
        <position position="207"/>
    </location>
</feature>
<feature type="modified residue" description="Phosphoserine" evidence="3">
    <location>
        <position position="395"/>
    </location>
</feature>
<feature type="modified residue" description="Phosphoserine" evidence="3">
    <location>
        <position position="590"/>
    </location>
</feature>
<feature type="modified residue" description="Phosphothreonine" evidence="3">
    <location>
        <position position="591"/>
    </location>
</feature>
<feature type="modified residue" description="Phosphoserine" evidence="3">
    <location>
        <position position="596"/>
    </location>
</feature>
<feature type="mutagenesis site" description="100-fold lower apparent affinity for tRNA(3)Lys.">
    <location>
        <begin position="2"/>
        <end position="50"/>
    </location>
</feature>
<proteinExistence type="evidence at protein level"/>
<organism>
    <name type="scientific">Cricetulus griseus</name>
    <name type="common">Chinese hamster</name>
    <name type="synonym">Cricetulus barabensis griseus</name>
    <dbReference type="NCBI Taxonomy" id="10029"/>
    <lineage>
        <taxon>Eukaryota</taxon>
        <taxon>Metazoa</taxon>
        <taxon>Chordata</taxon>
        <taxon>Craniata</taxon>
        <taxon>Vertebrata</taxon>
        <taxon>Euteleostomi</taxon>
        <taxon>Mammalia</taxon>
        <taxon>Eutheria</taxon>
        <taxon>Euarchontoglires</taxon>
        <taxon>Glires</taxon>
        <taxon>Rodentia</taxon>
        <taxon>Myomorpha</taxon>
        <taxon>Muroidea</taxon>
        <taxon>Cricetidae</taxon>
        <taxon>Cricetinae</taxon>
        <taxon>Cricetulus</taxon>
    </lineage>
</organism>
<dbReference type="EC" id="2.7.7.-" evidence="1"/>
<dbReference type="EC" id="6.1.1.6" evidence="4"/>
<dbReference type="EMBL" id="Z31711">
    <property type="protein sequence ID" value="CAA83505.1"/>
    <property type="molecule type" value="mRNA"/>
</dbReference>
<dbReference type="PIR" id="S43187">
    <property type="entry name" value="S43187"/>
</dbReference>
<dbReference type="RefSeq" id="XP_003510206.1">
    <property type="nucleotide sequence ID" value="XM_003510158.3"/>
</dbReference>
<dbReference type="SMR" id="P37879"/>
<dbReference type="IntAct" id="P37879">
    <property type="interactions" value="1"/>
</dbReference>
<dbReference type="PaxDb" id="10029-XP_007627885.1"/>
<dbReference type="Ensembl" id="ENSCGRT00001004876.1">
    <property type="protein sequence ID" value="ENSCGRP00001003392.1"/>
    <property type="gene ID" value="ENSCGRG00001004055.1"/>
</dbReference>
<dbReference type="GeneID" id="100766627"/>
<dbReference type="CTD" id="3735"/>
<dbReference type="eggNOG" id="KOG1885">
    <property type="taxonomic scope" value="Eukaryota"/>
</dbReference>
<dbReference type="GeneTree" id="ENSGT01030000234618"/>
<dbReference type="OMA" id="DFRNEGM"/>
<dbReference type="OrthoDB" id="21243at2759"/>
<dbReference type="SABIO-RK" id="P37879"/>
<dbReference type="Proteomes" id="UP000694386">
    <property type="component" value="Unplaced"/>
</dbReference>
<dbReference type="Proteomes" id="UP001108280">
    <property type="component" value="Unplaced"/>
</dbReference>
<dbReference type="GO" id="GO:0017101">
    <property type="term" value="C:aminoacyl-tRNA synthetase multienzyme complex"/>
    <property type="evidence" value="ECO:0000250"/>
    <property type="project" value="UniProtKB"/>
</dbReference>
<dbReference type="GO" id="GO:0005829">
    <property type="term" value="C:cytosol"/>
    <property type="evidence" value="ECO:0000250"/>
    <property type="project" value="UniProtKB"/>
</dbReference>
<dbReference type="GO" id="GO:0005615">
    <property type="term" value="C:extracellular space"/>
    <property type="evidence" value="ECO:0007669"/>
    <property type="project" value="TreeGrafter"/>
</dbReference>
<dbReference type="GO" id="GO:0005739">
    <property type="term" value="C:mitochondrion"/>
    <property type="evidence" value="ECO:0007669"/>
    <property type="project" value="TreeGrafter"/>
</dbReference>
<dbReference type="GO" id="GO:0005634">
    <property type="term" value="C:nucleus"/>
    <property type="evidence" value="ECO:0000250"/>
    <property type="project" value="UniProtKB"/>
</dbReference>
<dbReference type="GO" id="GO:0005886">
    <property type="term" value="C:plasma membrane"/>
    <property type="evidence" value="ECO:0007669"/>
    <property type="project" value="UniProtKB-SubCell"/>
</dbReference>
<dbReference type="GO" id="GO:0005524">
    <property type="term" value="F:ATP binding"/>
    <property type="evidence" value="ECO:0007669"/>
    <property type="project" value="UniProtKB-KW"/>
</dbReference>
<dbReference type="GO" id="GO:0003877">
    <property type="term" value="F:ATP:ADP adenylyltransferase activity"/>
    <property type="evidence" value="ECO:0000250"/>
    <property type="project" value="UniProtKB"/>
</dbReference>
<dbReference type="GO" id="GO:0004824">
    <property type="term" value="F:lysine-tRNA ligase activity"/>
    <property type="evidence" value="ECO:0000314"/>
    <property type="project" value="UniProtKB"/>
</dbReference>
<dbReference type="GO" id="GO:0000049">
    <property type="term" value="F:tRNA binding"/>
    <property type="evidence" value="ECO:0007669"/>
    <property type="project" value="TreeGrafter"/>
</dbReference>
<dbReference type="GO" id="GO:0002276">
    <property type="term" value="P:basophil activation involved in immune response"/>
    <property type="evidence" value="ECO:0007669"/>
    <property type="project" value="TreeGrafter"/>
</dbReference>
<dbReference type="GO" id="GO:0015966">
    <property type="term" value="P:diadenosine tetraphosphate biosynthetic process"/>
    <property type="evidence" value="ECO:0000250"/>
    <property type="project" value="UniProtKB"/>
</dbReference>
<dbReference type="GO" id="GO:0006430">
    <property type="term" value="P:lysyl-tRNA aminoacylation"/>
    <property type="evidence" value="ECO:0000314"/>
    <property type="project" value="UniProtKB"/>
</dbReference>
<dbReference type="GO" id="GO:0043032">
    <property type="term" value="P:positive regulation of macrophage activation"/>
    <property type="evidence" value="ECO:0007669"/>
    <property type="project" value="TreeGrafter"/>
</dbReference>
<dbReference type="CDD" id="cd00775">
    <property type="entry name" value="LysRS_core"/>
    <property type="match status" value="1"/>
</dbReference>
<dbReference type="CDD" id="cd04322">
    <property type="entry name" value="LysRS_N"/>
    <property type="match status" value="1"/>
</dbReference>
<dbReference type="FunFam" id="2.40.50.140:FF:000050">
    <property type="entry name" value="Lysine--tRNA ligase"/>
    <property type="match status" value="1"/>
</dbReference>
<dbReference type="FunFam" id="3.30.930.10:FF:000029">
    <property type="entry name" value="Lysine--tRNA ligase"/>
    <property type="match status" value="1"/>
</dbReference>
<dbReference type="Gene3D" id="3.30.930.10">
    <property type="entry name" value="Bira Bifunctional Protein, Domain 2"/>
    <property type="match status" value="1"/>
</dbReference>
<dbReference type="Gene3D" id="2.40.50.140">
    <property type="entry name" value="Nucleic acid-binding proteins"/>
    <property type="match status" value="1"/>
</dbReference>
<dbReference type="HAMAP" id="MF_00252">
    <property type="entry name" value="Lys_tRNA_synth_class2"/>
    <property type="match status" value="1"/>
</dbReference>
<dbReference type="InterPro" id="IPR004364">
    <property type="entry name" value="Aa-tRNA-synt_II"/>
</dbReference>
<dbReference type="InterPro" id="IPR006195">
    <property type="entry name" value="aa-tRNA-synth_II"/>
</dbReference>
<dbReference type="InterPro" id="IPR045864">
    <property type="entry name" value="aa-tRNA-synth_II/BPL/LPL"/>
</dbReference>
<dbReference type="InterPro" id="IPR002313">
    <property type="entry name" value="Lys-tRNA-ligase_II"/>
</dbReference>
<dbReference type="InterPro" id="IPR034762">
    <property type="entry name" value="Lys-tRNA-ligase_II_bac/euk"/>
</dbReference>
<dbReference type="InterPro" id="IPR044136">
    <property type="entry name" value="Lys-tRNA-ligase_II_N"/>
</dbReference>
<dbReference type="InterPro" id="IPR018149">
    <property type="entry name" value="Lys-tRNA-synth_II_C"/>
</dbReference>
<dbReference type="InterPro" id="IPR012340">
    <property type="entry name" value="NA-bd_OB-fold"/>
</dbReference>
<dbReference type="InterPro" id="IPR004365">
    <property type="entry name" value="NA-bd_OB_tRNA"/>
</dbReference>
<dbReference type="NCBIfam" id="TIGR00499">
    <property type="entry name" value="lysS_bact"/>
    <property type="match status" value="1"/>
</dbReference>
<dbReference type="NCBIfam" id="NF001756">
    <property type="entry name" value="PRK00484.1"/>
    <property type="match status" value="1"/>
</dbReference>
<dbReference type="PANTHER" id="PTHR42918:SF9">
    <property type="entry name" value="LYSINE--TRNA LIGASE"/>
    <property type="match status" value="1"/>
</dbReference>
<dbReference type="PANTHER" id="PTHR42918">
    <property type="entry name" value="LYSYL-TRNA SYNTHETASE"/>
    <property type="match status" value="1"/>
</dbReference>
<dbReference type="Pfam" id="PF00152">
    <property type="entry name" value="tRNA-synt_2"/>
    <property type="match status" value="1"/>
</dbReference>
<dbReference type="Pfam" id="PF01336">
    <property type="entry name" value="tRNA_anti-codon"/>
    <property type="match status" value="1"/>
</dbReference>
<dbReference type="PIRSF" id="PIRSF039101">
    <property type="entry name" value="LysRS2"/>
    <property type="match status" value="1"/>
</dbReference>
<dbReference type="PRINTS" id="PR00982">
    <property type="entry name" value="TRNASYNTHLYS"/>
</dbReference>
<dbReference type="SUPFAM" id="SSF55681">
    <property type="entry name" value="Class II aaRS and biotin synthetases"/>
    <property type="match status" value="1"/>
</dbReference>
<dbReference type="SUPFAM" id="SSF50249">
    <property type="entry name" value="Nucleic acid-binding proteins"/>
    <property type="match status" value="1"/>
</dbReference>
<dbReference type="PROSITE" id="PS50862">
    <property type="entry name" value="AA_TRNA_LIGASE_II"/>
    <property type="match status" value="1"/>
</dbReference>
<comment type="function">
    <text evidence="1 4">Catalyzes the specific attachment of an amino acid to its cognate tRNA in a 2 step reaction: the amino acid (AA) is first activated by ATP to form AA-AMP and then transferred to the acceptor end of the tRNA (PubMed:11706011). When secreted, acts as a signaling molecule that induces immune response through the activation of monocyte/macrophages. Catalyzes the synthesis of the signaling molecule diadenosine tetraphosphate (Ap4A), and thereby mediates disruption of the complex between HINT1 and MITF and the concomitant activation of MITF transcriptional activity (By similarity).</text>
</comment>
<comment type="catalytic activity">
    <reaction evidence="4">
        <text>tRNA(Lys) + L-lysine + ATP = L-lysyl-tRNA(Lys) + AMP + diphosphate</text>
        <dbReference type="Rhea" id="RHEA:20792"/>
        <dbReference type="Rhea" id="RHEA-COMP:9696"/>
        <dbReference type="Rhea" id="RHEA-COMP:9697"/>
        <dbReference type="ChEBI" id="CHEBI:30616"/>
        <dbReference type="ChEBI" id="CHEBI:32551"/>
        <dbReference type="ChEBI" id="CHEBI:33019"/>
        <dbReference type="ChEBI" id="CHEBI:78442"/>
        <dbReference type="ChEBI" id="CHEBI:78529"/>
        <dbReference type="ChEBI" id="CHEBI:456215"/>
        <dbReference type="EC" id="6.1.1.6"/>
    </reaction>
</comment>
<comment type="biophysicochemical properties">
    <kinetics>
        <KM evidence="4">104 uM for lysine</KM>
        <KM evidence="4">250 uM for ATP</KM>
        <KM evidence="4">3 uM for tRNA(3)Lys</KM>
    </kinetics>
</comment>
<comment type="subunit">
    <text evidence="1">Homodimer. Part of the multisynthetase complex (MSC), a multisubunit complex that groups tRNA ligases for Arg (RARS), Asp (DARS), Gln (QARS), Ile (IARS), Leu (LARS), Lys (KARS), Met (MARS) the bifunctional ligase for Glu and Pro (EPRS) and the auxiliary subunits AIMP1/p43, AIMP2/p38 and EEF1E1/p18. Interacts with AIMP2 (via N-terminus) and MITF. Interacts with TARSL2.</text>
</comment>
<comment type="subcellular location">
    <subcellularLocation>
        <location evidence="1">Cytoplasm</location>
        <location evidence="1">Cytosol</location>
    </subcellularLocation>
    <subcellularLocation>
        <location evidence="1">Cytoplasm</location>
    </subcellularLocation>
    <subcellularLocation>
        <location evidence="1">Nucleus</location>
    </subcellularLocation>
    <subcellularLocation>
        <location evidence="1">Cell membrane</location>
        <topology evidence="1">Peripheral membrane protein</topology>
    </subcellularLocation>
    <subcellularLocation>
        <location evidence="1">Secreted</location>
    </subcellularLocation>
    <text evidence="1">Secretion is induced by TNF-alpha. Cytosolic in quiescent mast cells. Translocates into the nucleus in response to mast cell activation by immunoglobulin E.</text>
</comment>
<comment type="domain">
    <text evidence="1">The N-terminal domain (1-65) is a functional tRNA-binding domain and is involved in the interaction with DARS, but has a repulsive role in the binding to EEF1A1. A central domain (208-259) is involved in homodimerization. The C-terminal domain (452-597) is not required for interaction with AIMP2 (By similarity).</text>
</comment>
<comment type="PTM">
    <text evidence="2">Phosphorylated on a serine residue after mast cell stimulation with immunoglobulin E (IgE).</text>
</comment>
<comment type="miscellaneous">
    <text evidence="5">It is likely that the same gene provides both this cytoplasmic isoform and an additional mitochondrial isoform.</text>
</comment>
<comment type="similarity">
    <text evidence="5">Belongs to the class-II aminoacyl-tRNA synthetase family.</text>
</comment>
<reference key="1">
    <citation type="journal article" date="1996" name="Biochemistry">
        <title>Functional replacement of hamster lysyl-tRNA synthetase by the yeast enzyme requires cognate amino acid sequences for proper tRNA recognition.</title>
        <authorList>
            <person name="Agou F."/>
            <person name="Quevillon S."/>
            <person name="Kerjan P."/>
            <person name="Latreille M.-T."/>
            <person name="Mirande M."/>
        </authorList>
    </citation>
    <scope>NUCLEOTIDE SEQUENCE [MRNA]</scope>
    <source>
        <tissue>Ovary</tissue>
    </source>
</reference>
<reference key="2">
    <citation type="journal article" date="2002" name="J. Biol. Chem.">
        <title>The N-terminal domain of mammalian Lysyl-tRNA synthetase is a functional tRNA-binding domain.</title>
        <authorList>
            <person name="Francin M."/>
            <person name="Kaminska M."/>
            <person name="Kerjan P."/>
            <person name="Mirande M."/>
        </authorList>
    </citation>
    <scope>FUNCTION</scope>
    <scope>CATALYTIC ACTIVITY</scope>
    <scope>BIOPHYSICOCHEMICAL PROPERTIES</scope>
    <scope>MUTAGENESIS OF 1-MET--GLN-50</scope>
</reference>
<keyword id="KW-0007">Acetylation</keyword>
<keyword id="KW-0030">Aminoacyl-tRNA synthetase</keyword>
<keyword id="KW-0067">ATP-binding</keyword>
<keyword id="KW-1003">Cell membrane</keyword>
<keyword id="KW-0963">Cytoplasm</keyword>
<keyword id="KW-0436">Ligase</keyword>
<keyword id="KW-0472">Membrane</keyword>
<keyword id="KW-0547">Nucleotide-binding</keyword>
<keyword id="KW-0539">Nucleus</keyword>
<keyword id="KW-0597">Phosphoprotein</keyword>
<keyword id="KW-0648">Protein biosynthesis</keyword>
<keyword id="KW-0964">Secreted</keyword>
<keyword id="KW-0808">Transferase</keyword>
<gene>
    <name evidence="1" type="primary">KARS1</name>
    <name type="synonym">KARS</name>
</gene>
<sequence>MATLQECKVKVDGEPKLSKNELKRRLKAEKKLAEKEAKQKELIEKQLSQAAAAAATNHTADNGVGVEEETLDPNQYYKIRSQAIHQLKVSGEDPYPHKFHVDISLTQFIQEYSQLQPGDHLTDITLKVAGRIHAKRASGGKLIFYDLRGEGVKLQVMANSRNYKSEEEFVRINNKLRRGDIIGVQGNPGKTKKGELSIIPYEITLLSPCLHMLPHLHFGLKDKETRYRQRYLDLILNDFVRQKFIVRAKIITYIRSFLDELGFLEIETPMMNIIPGGAVAKPFITYHNELDMNLYMRIAPELYHKMLVVGGIDRVYEIGRQFRNEGIDLTHNPEFTTCEFYMAYADYHDLMEITEKMLSGMVKSITGSYKITYHPDGPEGEAYEIDFTPPFRRISMVEELEKALGVKLPETSLFETEETRKILDDICVAKAVECPPPRTTARLLDKLVGEFLEVTCINPTFICDHPQIMSPLAKWHRSKEGLTERFELFVMKKEICNAYTELNDPMRQRQLFEEQAKAKAAGDDEAMFIDENFCTALEYGLPPTAGWGMGIDRVTMFLTDSNNIKEVLLFPAMKPEDKKETAAATETLESTTAGPSV</sequence>
<protein>
    <recommendedName>
        <fullName>Lysine--tRNA ligase</fullName>
        <ecNumber evidence="1">2.7.7.-</ecNumber>
        <ecNumber evidence="4">6.1.1.6</ecNumber>
    </recommendedName>
    <alternativeName>
        <fullName>Lysyl-tRNA synthetase</fullName>
        <shortName>LysRS</shortName>
    </alternativeName>
</protein>
<name>SYK_CRIGR</name>
<evidence type="ECO:0000250" key="1">
    <source>
        <dbReference type="UniProtKB" id="Q15046"/>
    </source>
</evidence>
<evidence type="ECO:0000250" key="2">
    <source>
        <dbReference type="UniProtKB" id="Q5XIM7"/>
    </source>
</evidence>
<evidence type="ECO:0000250" key="3">
    <source>
        <dbReference type="UniProtKB" id="Q99MN1"/>
    </source>
</evidence>
<evidence type="ECO:0000269" key="4">
    <source>
    </source>
</evidence>
<evidence type="ECO:0000305" key="5"/>
<accession>P37879</accession>